<organism>
    <name type="scientific">Methanosarcina barkeri (strain Fusaro / DSM 804)</name>
    <dbReference type="NCBI Taxonomy" id="269797"/>
    <lineage>
        <taxon>Archaea</taxon>
        <taxon>Methanobacteriati</taxon>
        <taxon>Methanobacteriota</taxon>
        <taxon>Stenosarchaea group</taxon>
        <taxon>Methanomicrobia</taxon>
        <taxon>Methanosarcinales</taxon>
        <taxon>Methanosarcinaceae</taxon>
        <taxon>Methanosarcina</taxon>
    </lineage>
</organism>
<reference key="1">
    <citation type="journal article" date="1987" name="Nucleic Acids Res.">
        <title>Nucleotide sequence of the methyl coenzyme M reductase gene cluster from Methanosarcina barkeri.</title>
        <authorList>
            <person name="Bokranz M."/>
            <person name="Klein A."/>
        </authorList>
    </citation>
    <scope>NUCLEOTIDE SEQUENCE [GENOMIC DNA]</scope>
</reference>
<reference key="2">
    <citation type="journal article" date="2006" name="J. Bacteriol.">
        <title>The Methanosarcina barkeri genome: comparative analysis with Methanosarcina acetivorans and Methanosarcina mazei reveals extensive rearrangement within methanosarcinal genomes.</title>
        <authorList>
            <person name="Maeder D.L."/>
            <person name="Anderson I."/>
            <person name="Brettin T.S."/>
            <person name="Bruce D.C."/>
            <person name="Gilna P."/>
            <person name="Han C.S."/>
            <person name="Lapidus A."/>
            <person name="Metcalf W.W."/>
            <person name="Saunders E."/>
            <person name="Tapia R."/>
            <person name="Sowers K.R."/>
        </authorList>
    </citation>
    <scope>NUCLEOTIDE SEQUENCE [LARGE SCALE GENOMIC DNA]</scope>
    <source>
        <strain>Fusaro / DSM 804</strain>
    </source>
</reference>
<reference evidence="5" key="3">
    <citation type="journal article" date="2000" name="J. Mol. Biol.">
        <title>Comparison of three methyl-coenzyme M reductases from phylogenetically distant organisms: unusual amino acid modification, conservation and adaptation.</title>
        <authorList>
            <person name="Grabarse W."/>
            <person name="Mahlert F."/>
            <person name="Shima S."/>
            <person name="Thauer R.K."/>
            <person name="Ermler U."/>
        </authorList>
    </citation>
    <scope>X-RAY CRYSTALLOGRAPHY (1.6 ANGSTROMS) IN COMPLEX WITH COENZYME F430; COENZYME B; COENZYME M AND MCR SUBUNITS ALPHA AND GAMMA</scope>
    <scope>FUNCTION</scope>
    <scope>COFACTOR</scope>
    <scope>SUBUNIT</scope>
    <source>
        <strain>Fusaro / DSM 804</strain>
    </source>
</reference>
<sequence length="434" mass="45421">MSDTVDIYDDRGKLLESNVDIMSLAPTRNAAIQSIIMDTKRSVAVNLAGIQGALASGKMGGKGRQILGRGLNYDIVGNADAIAENVKKLVQVDEGDDTNVIKVKGGKSLLIQSPKSRIIAGADFMSATTVGAAAVTQTIMDMFGTDPYDAPIVKSAVWGSYPQTMDLMGGQVQGILSIPQNNEGLGFSLRNIMANHVAAISNRNAMNASALSSIYEQSGIFEMGGAVGMFERHQLLGLAYQGLNANNLLYDIVKENGKDGTIGTVIESVVRRAIEAGIISVDKTAPSGYNFYKANDVPKWNACAAVGTLAATLVNCGAGRAAQNVSSTLLYFNDILEKETGLPGCDYGKVEGTAVGFSFFSHSIYGGGGPGVFNGNHVVTRHSRGFAIPCVCAAVALDAGTQMFSIESTSGLIGDVFGAIPEFREPIKAVAGVL</sequence>
<comment type="function">
    <text evidence="4">Component of the methyl-coenzyme M reductase (MCR) I that catalyzes the reductive cleavage of methyl-coenzyme M (CoM-S-CH3 or 2-(methylthio)ethanesulfonate) using coenzyme B (CoB or 7-mercaptoheptanoylthreonine phosphate) as reductant which results in the production of methane and the mixed heterodisulfide of CoB and CoM (CoM-S-S-CoB). This is the final step in methanogenesis.</text>
</comment>
<comment type="catalytic activity">
    <reaction evidence="1">
        <text>coenzyme B + methyl-coenzyme M = methane + coenzyme M-coenzyme B heterodisulfide</text>
        <dbReference type="Rhea" id="RHEA:12532"/>
        <dbReference type="ChEBI" id="CHEBI:16183"/>
        <dbReference type="ChEBI" id="CHEBI:58286"/>
        <dbReference type="ChEBI" id="CHEBI:58411"/>
        <dbReference type="ChEBI" id="CHEBI:58596"/>
        <dbReference type="EC" id="2.8.4.1"/>
    </reaction>
    <physiologicalReaction direction="left-to-right" evidence="1">
        <dbReference type="Rhea" id="RHEA:12533"/>
    </physiologicalReaction>
</comment>
<comment type="cofactor">
    <cofactor evidence="2">
        <name>coenzyme F430</name>
        <dbReference type="ChEBI" id="CHEBI:60540"/>
    </cofactor>
    <text evidence="1 2">Binds 2 coenzyme F430 non-covalently per MCR complex. Coenzyme F430 is a yellow nickel porphinoid (PubMed:11023796). Methyl-coenzyme-M reductase is activated when the enzyme-bound coenzyme F430 is reduced to the Ni(I) oxidation state (By similarity).</text>
</comment>
<comment type="pathway">
    <text evidence="1">One-carbon metabolism; methyl-coenzyme M reduction; methane from methyl-coenzyme M: step 1/1.</text>
</comment>
<comment type="subunit">
    <text evidence="2">MCR is a hexamer of two alpha, two beta, and two gamma chains, forming a dimer of heterotrimers.</text>
</comment>
<comment type="subcellular location">
    <subcellularLocation>
        <location evidence="1">Cytoplasm</location>
    </subcellularLocation>
</comment>
<comment type="similarity">
    <text evidence="3">Belongs to the methyl-coenzyme M reductase beta subunit family.</text>
</comment>
<keyword id="KW-0002">3D-structure</keyword>
<keyword id="KW-0963">Cytoplasm</keyword>
<keyword id="KW-0484">Methanogenesis</keyword>
<keyword id="KW-0808">Transferase</keyword>
<accession>P07955</accession>
<accession>Q46E21</accession>
<protein>
    <recommendedName>
        <fullName>Methyl-coenzyme M reductase subunit beta</fullName>
        <ecNumber evidence="1">2.8.4.1</ecNumber>
    </recommendedName>
    <alternativeName>
        <fullName>Coenzyme-B sulfoethylthiotransferase beta</fullName>
    </alternativeName>
</protein>
<evidence type="ECO:0000250" key="1">
    <source>
        <dbReference type="UniProtKB" id="P11560"/>
    </source>
</evidence>
<evidence type="ECO:0000269" key="2">
    <source>
    </source>
</evidence>
<evidence type="ECO:0000305" key="3"/>
<evidence type="ECO:0000305" key="4">
    <source>
    </source>
</evidence>
<evidence type="ECO:0007744" key="5">
    <source>
        <dbReference type="PDB" id="1E6Y"/>
    </source>
</evidence>
<evidence type="ECO:0007829" key="6">
    <source>
        <dbReference type="PDB" id="1E6Y"/>
    </source>
</evidence>
<name>MCRB_METBF</name>
<proteinExistence type="evidence at protein level"/>
<dbReference type="EC" id="2.8.4.1" evidence="1"/>
<dbReference type="EMBL" id="Y00158">
    <property type="protein sequence ID" value="CAA68353.1"/>
    <property type="molecule type" value="Genomic_DNA"/>
</dbReference>
<dbReference type="EMBL" id="CP000099">
    <property type="protein sequence ID" value="AAZ69871.1"/>
    <property type="molecule type" value="Genomic_DNA"/>
</dbReference>
<dbReference type="PIR" id="A29525">
    <property type="entry name" value="A29525"/>
</dbReference>
<dbReference type="PDB" id="1E6Y">
    <property type="method" value="X-ray"/>
    <property type="resolution" value="1.60 A"/>
    <property type="chains" value="B/E=2-434"/>
</dbReference>
<dbReference type="PDBsum" id="1E6Y"/>
<dbReference type="SMR" id="P07955"/>
<dbReference type="STRING" id="269797.Mbar_A0897"/>
<dbReference type="PaxDb" id="269797-Mbar_A0897"/>
<dbReference type="GeneID" id="24821493"/>
<dbReference type="KEGG" id="mba:Mbar_A0897"/>
<dbReference type="eggNOG" id="arCOG04860">
    <property type="taxonomic scope" value="Archaea"/>
</dbReference>
<dbReference type="HOGENOM" id="CLU_617682_0_0_2"/>
<dbReference type="OrthoDB" id="52873at2157"/>
<dbReference type="BRENDA" id="2.8.4.1">
    <property type="organism ID" value="3250"/>
</dbReference>
<dbReference type="UniPathway" id="UPA00646">
    <property type="reaction ID" value="UER00699"/>
</dbReference>
<dbReference type="EvolutionaryTrace" id="P07955"/>
<dbReference type="GO" id="GO:0005737">
    <property type="term" value="C:cytoplasm"/>
    <property type="evidence" value="ECO:0007669"/>
    <property type="project" value="UniProtKB-SubCell"/>
</dbReference>
<dbReference type="GO" id="GO:0050524">
    <property type="term" value="F:coenzyme-B sulfoethylthiotransferase activity"/>
    <property type="evidence" value="ECO:0007669"/>
    <property type="project" value="UniProtKB-EC"/>
</dbReference>
<dbReference type="GO" id="GO:0015948">
    <property type="term" value="P:methanogenesis"/>
    <property type="evidence" value="ECO:0007669"/>
    <property type="project" value="UniProtKB-KW"/>
</dbReference>
<dbReference type="Gene3D" id="3.30.70.470">
    <property type="match status" value="1"/>
</dbReference>
<dbReference type="Gene3D" id="1.20.840.10">
    <property type="entry name" value="Methyl-coenzyme M reductase, alpha/beta subunit, C-terminal"/>
    <property type="match status" value="1"/>
</dbReference>
<dbReference type="InterPro" id="IPR008924">
    <property type="entry name" value="Me_CoM_Rdtase_asu/bsu_C"/>
</dbReference>
<dbReference type="InterPro" id="IPR015823">
    <property type="entry name" value="Me_CoM_Rdtase_asu_N_sub2"/>
</dbReference>
<dbReference type="InterPro" id="IPR003179">
    <property type="entry name" value="Me_CoM_Rdtase_bsu"/>
</dbReference>
<dbReference type="InterPro" id="IPR022679">
    <property type="entry name" value="Me_CoM_Rdtase_bsu_C"/>
</dbReference>
<dbReference type="InterPro" id="IPR022680">
    <property type="entry name" value="Me_CoM_Rdtase_bsu_N"/>
</dbReference>
<dbReference type="InterPro" id="IPR009024">
    <property type="entry name" value="Me_CoM_Rdtase_Fd-like_fold"/>
</dbReference>
<dbReference type="NCBIfam" id="TIGR03257">
    <property type="entry name" value="met_CoM_red_bet"/>
    <property type="match status" value="1"/>
</dbReference>
<dbReference type="Pfam" id="PF02241">
    <property type="entry name" value="MCR_beta"/>
    <property type="match status" value="1"/>
</dbReference>
<dbReference type="Pfam" id="PF02783">
    <property type="entry name" value="MCR_beta_N"/>
    <property type="match status" value="1"/>
</dbReference>
<dbReference type="PIRSF" id="PIRSF000263">
    <property type="entry name" value="Meth_CoM_rd_beta"/>
    <property type="match status" value="1"/>
</dbReference>
<dbReference type="SUPFAM" id="SSF48081">
    <property type="entry name" value="Methyl-coenzyme M reductase alpha and beta chain C-terminal domain"/>
    <property type="match status" value="1"/>
</dbReference>
<dbReference type="SUPFAM" id="SSF55088">
    <property type="entry name" value="Methyl-coenzyme M reductase subunits"/>
    <property type="match status" value="1"/>
</dbReference>
<gene>
    <name type="primary">mcrB</name>
    <name type="ordered locus">Mbar_A0897</name>
</gene>
<feature type="chain" id="PRO_0000147462" description="Methyl-coenzyme M reductase subunit beta">
    <location>
        <begin position="1"/>
        <end position="434"/>
    </location>
</feature>
<feature type="binding site" evidence="2 5">
    <location>
        <position position="365"/>
    </location>
    <ligand>
        <name>coenzyme M</name>
        <dbReference type="ChEBI" id="CHEBI:58319"/>
    </ligand>
</feature>
<feature type="binding site" evidence="2 5">
    <location>
        <position position="367"/>
    </location>
    <ligand>
        <name>coenzyme B</name>
        <dbReference type="ChEBI" id="CHEBI:58596"/>
    </ligand>
</feature>
<feature type="strand" evidence="6">
    <location>
        <begin position="4"/>
        <end position="8"/>
    </location>
</feature>
<feature type="strand" evidence="6">
    <location>
        <begin position="14"/>
        <end position="20"/>
    </location>
</feature>
<feature type="helix" evidence="6">
    <location>
        <begin position="21"/>
        <end position="24"/>
    </location>
</feature>
<feature type="turn" evidence="6">
    <location>
        <begin position="26"/>
        <end position="28"/>
    </location>
</feature>
<feature type="helix" evidence="6">
    <location>
        <begin position="30"/>
        <end position="41"/>
    </location>
</feature>
<feature type="strand" evidence="6">
    <location>
        <begin position="42"/>
        <end position="46"/>
    </location>
</feature>
<feature type="helix" evidence="6">
    <location>
        <begin position="47"/>
        <end position="56"/>
    </location>
</feature>
<feature type="helix" evidence="6">
    <location>
        <begin position="76"/>
        <end position="78"/>
    </location>
</feature>
<feature type="helix" evidence="6">
    <location>
        <begin position="79"/>
        <end position="90"/>
    </location>
</feature>
<feature type="strand" evidence="6">
    <location>
        <begin position="99"/>
        <end position="103"/>
    </location>
</feature>
<feature type="turn" evidence="6">
    <location>
        <begin position="104"/>
        <end position="107"/>
    </location>
</feature>
<feature type="strand" evidence="6">
    <location>
        <begin position="108"/>
        <end position="112"/>
    </location>
</feature>
<feature type="helix" evidence="6">
    <location>
        <begin position="115"/>
        <end position="119"/>
    </location>
</feature>
<feature type="strand" evidence="6">
    <location>
        <begin position="121"/>
        <end position="124"/>
    </location>
</feature>
<feature type="helix" evidence="6">
    <location>
        <begin position="126"/>
        <end position="142"/>
    </location>
</feature>
<feature type="helix" evidence="6">
    <location>
        <begin position="147"/>
        <end position="149"/>
    </location>
</feature>
<feature type="helix" evidence="6">
    <location>
        <begin position="150"/>
        <end position="158"/>
    </location>
</feature>
<feature type="turn" evidence="6">
    <location>
        <begin position="159"/>
        <end position="163"/>
    </location>
</feature>
<feature type="strand" evidence="6">
    <location>
        <begin position="164"/>
        <end position="166"/>
    </location>
</feature>
<feature type="strand" evidence="6">
    <location>
        <begin position="171"/>
        <end position="173"/>
    </location>
</feature>
<feature type="helix" evidence="6">
    <location>
        <begin position="179"/>
        <end position="181"/>
    </location>
</feature>
<feature type="helix" evidence="6">
    <location>
        <begin position="188"/>
        <end position="190"/>
    </location>
</feature>
<feature type="helix" evidence="6">
    <location>
        <begin position="194"/>
        <end position="200"/>
    </location>
</feature>
<feature type="turn" evidence="6">
    <location>
        <begin position="201"/>
        <end position="203"/>
    </location>
</feature>
<feature type="helix" evidence="6">
    <location>
        <begin position="205"/>
        <end position="222"/>
    </location>
</feature>
<feature type="helix" evidence="6">
    <location>
        <begin position="229"/>
        <end position="243"/>
    </location>
</feature>
<feature type="helix" evidence="6">
    <location>
        <begin position="248"/>
        <end position="256"/>
    </location>
</feature>
<feature type="turn" evidence="6">
    <location>
        <begin position="257"/>
        <end position="259"/>
    </location>
</feature>
<feature type="helix" evidence="6">
    <location>
        <begin position="262"/>
        <end position="275"/>
    </location>
</feature>
<feature type="strand" evidence="6">
    <location>
        <begin position="278"/>
        <end position="284"/>
    </location>
</feature>
<feature type="strand" evidence="6">
    <location>
        <begin position="290"/>
        <end position="296"/>
    </location>
</feature>
<feature type="helix" evidence="6">
    <location>
        <begin position="297"/>
        <end position="319"/>
    </location>
</feature>
<feature type="helix" evidence="6">
    <location>
        <begin position="322"/>
        <end position="324"/>
    </location>
</feature>
<feature type="helix" evidence="6">
    <location>
        <begin position="325"/>
        <end position="340"/>
    </location>
</feature>
<feature type="helix" evidence="6">
    <location>
        <begin position="345"/>
        <end position="348"/>
    </location>
</feature>
<feature type="helix" evidence="6">
    <location>
        <begin position="349"/>
        <end position="359"/>
    </location>
</feature>
<feature type="strand" evidence="6">
    <location>
        <begin position="362"/>
        <end position="366"/>
    </location>
</feature>
<feature type="helix" evidence="6">
    <location>
        <begin position="370"/>
        <end position="372"/>
    </location>
</feature>
<feature type="turn" evidence="6">
    <location>
        <begin position="378"/>
        <end position="380"/>
    </location>
</feature>
<feature type="strand" evidence="6">
    <location>
        <begin position="382"/>
        <end position="387"/>
    </location>
</feature>
<feature type="helix" evidence="6">
    <location>
        <begin position="388"/>
        <end position="397"/>
    </location>
</feature>
<feature type="helix" evidence="6">
    <location>
        <begin position="406"/>
        <end position="417"/>
    </location>
</feature>
<feature type="helix" evidence="6">
    <location>
        <begin position="421"/>
        <end position="424"/>
    </location>
</feature>
<feature type="helix" evidence="6">
    <location>
        <begin position="426"/>
        <end position="431"/>
    </location>
</feature>